<reference key="1">
    <citation type="journal article" date="2006" name="PLoS Genet.">
        <title>Secrets of soil survival revealed by the genome sequence of Arthrobacter aurescens TC1.</title>
        <authorList>
            <person name="Mongodin E.F."/>
            <person name="Shapir N."/>
            <person name="Daugherty S.C."/>
            <person name="DeBoy R.T."/>
            <person name="Emerson J.B."/>
            <person name="Shvartzbeyn A."/>
            <person name="Radune D."/>
            <person name="Vamathevan J."/>
            <person name="Riggs F."/>
            <person name="Grinberg V."/>
            <person name="Khouri H.M."/>
            <person name="Wackett L.P."/>
            <person name="Nelson K.E."/>
            <person name="Sadowsky M.J."/>
        </authorList>
    </citation>
    <scope>NUCLEOTIDE SEQUENCE [LARGE SCALE GENOMIC DNA]</scope>
    <source>
        <strain>TC1</strain>
    </source>
</reference>
<keyword id="KW-0131">Cell cycle</keyword>
<keyword id="KW-0132">Cell division</keyword>
<keyword id="KW-0238">DNA-binding</keyword>
<comment type="function">
    <text evidence="1">Involved in cell division and chromosome segregation.</text>
</comment>
<comment type="similarity">
    <text evidence="1">Belongs to the WhiA family.</text>
</comment>
<dbReference type="EMBL" id="CP000474">
    <property type="protein sequence ID" value="ABM10259.1"/>
    <property type="molecule type" value="Genomic_DNA"/>
</dbReference>
<dbReference type="RefSeq" id="WP_011774774.1">
    <property type="nucleotide sequence ID" value="NC_008711.1"/>
</dbReference>
<dbReference type="SMR" id="A1R6G8"/>
<dbReference type="STRING" id="290340.AAur_2086"/>
<dbReference type="KEGG" id="aau:AAur_2086"/>
<dbReference type="eggNOG" id="COG1481">
    <property type="taxonomic scope" value="Bacteria"/>
</dbReference>
<dbReference type="HOGENOM" id="CLU_053282_0_0_11"/>
<dbReference type="OrthoDB" id="5197218at2"/>
<dbReference type="Proteomes" id="UP000000637">
    <property type="component" value="Chromosome"/>
</dbReference>
<dbReference type="GO" id="GO:0003677">
    <property type="term" value="F:DNA binding"/>
    <property type="evidence" value="ECO:0007669"/>
    <property type="project" value="UniProtKB-UniRule"/>
</dbReference>
<dbReference type="GO" id="GO:0051301">
    <property type="term" value="P:cell division"/>
    <property type="evidence" value="ECO:0007669"/>
    <property type="project" value="UniProtKB-UniRule"/>
</dbReference>
<dbReference type="GO" id="GO:0043937">
    <property type="term" value="P:regulation of sporulation"/>
    <property type="evidence" value="ECO:0007669"/>
    <property type="project" value="InterPro"/>
</dbReference>
<dbReference type="FunFam" id="3.10.28.10:FF:000001">
    <property type="entry name" value="Probable cell division protein WhiA"/>
    <property type="match status" value="1"/>
</dbReference>
<dbReference type="Gene3D" id="3.10.28.10">
    <property type="entry name" value="Homing endonucleases"/>
    <property type="match status" value="1"/>
</dbReference>
<dbReference type="HAMAP" id="MF_01420">
    <property type="entry name" value="HTH_type_WhiA"/>
    <property type="match status" value="1"/>
</dbReference>
<dbReference type="InterPro" id="IPR027434">
    <property type="entry name" value="Homing_endonucl"/>
</dbReference>
<dbReference type="InterPro" id="IPR018478">
    <property type="entry name" value="Sporu_reg_WhiA_N_dom"/>
</dbReference>
<dbReference type="InterPro" id="IPR003802">
    <property type="entry name" value="Sporulation_regulator_WhiA"/>
</dbReference>
<dbReference type="InterPro" id="IPR023054">
    <property type="entry name" value="Sporulation_regulator_WhiA_C"/>
</dbReference>
<dbReference type="InterPro" id="IPR039518">
    <property type="entry name" value="WhiA_LAGLIDADG_dom"/>
</dbReference>
<dbReference type="NCBIfam" id="TIGR00647">
    <property type="entry name" value="DNA_bind_WhiA"/>
    <property type="match status" value="1"/>
</dbReference>
<dbReference type="PANTHER" id="PTHR37307">
    <property type="entry name" value="CELL DIVISION PROTEIN WHIA-RELATED"/>
    <property type="match status" value="1"/>
</dbReference>
<dbReference type="PANTHER" id="PTHR37307:SF1">
    <property type="entry name" value="CELL DIVISION PROTEIN WHIA-RELATED"/>
    <property type="match status" value="1"/>
</dbReference>
<dbReference type="Pfam" id="PF02650">
    <property type="entry name" value="HTH_WhiA"/>
    <property type="match status" value="1"/>
</dbReference>
<dbReference type="Pfam" id="PF14527">
    <property type="entry name" value="LAGLIDADG_WhiA"/>
    <property type="match status" value="1"/>
</dbReference>
<dbReference type="Pfam" id="PF10298">
    <property type="entry name" value="WhiA_N"/>
    <property type="match status" value="1"/>
</dbReference>
<organism>
    <name type="scientific">Paenarthrobacter aurescens (strain TC1)</name>
    <dbReference type="NCBI Taxonomy" id="290340"/>
    <lineage>
        <taxon>Bacteria</taxon>
        <taxon>Bacillati</taxon>
        <taxon>Actinomycetota</taxon>
        <taxon>Actinomycetes</taxon>
        <taxon>Micrococcales</taxon>
        <taxon>Micrococcaceae</taxon>
        <taxon>Paenarthrobacter</taxon>
    </lineage>
</organism>
<gene>
    <name evidence="1" type="primary">whiA</name>
    <name type="ordered locus">AAur_2086</name>
</gene>
<feature type="chain" id="PRO_0000376424" description="Probable cell division protein WhiA">
    <location>
        <begin position="1"/>
        <end position="326"/>
    </location>
</feature>
<feature type="DNA-binding region" description="H-T-H motif" evidence="1">
    <location>
        <begin position="275"/>
        <end position="308"/>
    </location>
</feature>
<protein>
    <recommendedName>
        <fullName evidence="1">Probable cell division protein WhiA</fullName>
    </recommendedName>
</protein>
<evidence type="ECO:0000255" key="1">
    <source>
        <dbReference type="HAMAP-Rule" id="MF_01420"/>
    </source>
</evidence>
<name>WHIA_PAEAT</name>
<proteinExistence type="inferred from homology"/>
<sequence>MALTASVKDELSRLDIKKSSVRKAEVSAMLRFAGGLHIISGRIVIEAEVDLASTARRLRAAIAEVYGHQSEIIVVSGGGLRRGSRYVVRVVRDGEALARQTGLLDGRGRPVRGLPSAVVNGSAADAEAVWRGAFLAHGSLTEPGRSSSLEVTCPGPESALALVGAARRLGIQAKAREVRGVDRVVIRDGDTIATLLTRMGAHDALMVWEERRMRKEVRATANRLANFDDANLRRSAQAAVAAGARVDRALEILGDDVPDHLKYAGELRVAHKQASLDELGRLADPPMTKDAIAGRIRRLLAMADKRALDLGIPGTEANVTPEMMDE</sequence>
<accession>A1R6G8</accession>